<organism>
    <name type="scientific">Sulfurisphaera tokodaii (strain DSM 16993 / JCM 10545 / NBRC 100140 / 7)</name>
    <name type="common">Sulfolobus tokodaii</name>
    <dbReference type="NCBI Taxonomy" id="273063"/>
    <lineage>
        <taxon>Archaea</taxon>
        <taxon>Thermoproteota</taxon>
        <taxon>Thermoprotei</taxon>
        <taxon>Sulfolobales</taxon>
        <taxon>Sulfolobaceae</taxon>
        <taxon>Sulfurisphaera</taxon>
    </lineage>
</organism>
<reference key="1">
    <citation type="journal article" date="2001" name="DNA Res.">
        <title>Complete genome sequence of an aerobic thermoacidophilic Crenarchaeon, Sulfolobus tokodaii strain7.</title>
        <authorList>
            <person name="Kawarabayasi Y."/>
            <person name="Hino Y."/>
            <person name="Horikawa H."/>
            <person name="Jin-no K."/>
            <person name="Takahashi M."/>
            <person name="Sekine M."/>
            <person name="Baba S."/>
            <person name="Ankai A."/>
            <person name="Kosugi H."/>
            <person name="Hosoyama A."/>
            <person name="Fukui S."/>
            <person name="Nagai Y."/>
            <person name="Nishijima K."/>
            <person name="Otsuka R."/>
            <person name="Nakazawa H."/>
            <person name="Takamiya M."/>
            <person name="Kato Y."/>
            <person name="Yoshizawa T."/>
            <person name="Tanaka T."/>
            <person name="Kudoh Y."/>
            <person name="Yamazaki J."/>
            <person name="Kushida N."/>
            <person name="Oguchi A."/>
            <person name="Aoki K."/>
            <person name="Masuda S."/>
            <person name="Yanagii M."/>
            <person name="Nishimura M."/>
            <person name="Yamagishi A."/>
            <person name="Oshima T."/>
            <person name="Kikuchi H."/>
        </authorList>
    </citation>
    <scope>NUCLEOTIDE SEQUENCE [LARGE SCALE GENOMIC DNA]</scope>
    <source>
        <strain>DSM 16993 / JCM 10545 / NBRC 100140 / 7</strain>
    </source>
</reference>
<sequence>MSDEFIDINNYIAIVYTYKTVGISKLYEHYVKDQELLLLKGLIKGEISVLQTCNRAETYLYTYNKEEFKDFLQKLDEIHGKQISKDAMILKGEDAVKHLFEVASGLDSLAIGEYEILRQLKESIEKSKKLGLSSEKLEFLFKNAIKVGRKIRQQTEISKGKTGIYALAVEYAKHVSNNNIGNVKIAIVGAGEIGNKLALMLKNEGAQNVTIFNRTYEKALEVANKYGFKAEPLDFYKINNYDIVFVAIYYDKKINLPNPKLVIDLSVPQIVLGNNVITLENLRSISDKIMETKILSLQKAEELIHIEIENFKNEIIKYNQNRLISKFMKRIEDIREAEINRAYAEILKHANDKEEIKNIIDKMTNSMLKKIFSPLFETVRKNEDMANYINNIFEILSNGNISNSKTEEAKEK</sequence>
<proteinExistence type="inferred from homology"/>
<name>HEM1_SULTO</name>
<comment type="function">
    <text evidence="1">Catalyzes the NADPH-dependent reduction of glutamyl-tRNA(Glu) to glutamate 1-semialdehyde (GSA).</text>
</comment>
<comment type="catalytic activity">
    <reaction evidence="1">
        <text>(S)-4-amino-5-oxopentanoate + tRNA(Glu) + NADP(+) = L-glutamyl-tRNA(Glu) + NADPH + H(+)</text>
        <dbReference type="Rhea" id="RHEA:12344"/>
        <dbReference type="Rhea" id="RHEA-COMP:9663"/>
        <dbReference type="Rhea" id="RHEA-COMP:9680"/>
        <dbReference type="ChEBI" id="CHEBI:15378"/>
        <dbReference type="ChEBI" id="CHEBI:57501"/>
        <dbReference type="ChEBI" id="CHEBI:57783"/>
        <dbReference type="ChEBI" id="CHEBI:58349"/>
        <dbReference type="ChEBI" id="CHEBI:78442"/>
        <dbReference type="ChEBI" id="CHEBI:78520"/>
        <dbReference type="EC" id="1.2.1.70"/>
    </reaction>
</comment>
<comment type="pathway">
    <text evidence="1">Porphyrin-containing compound metabolism; protoporphyrin-IX biosynthesis; 5-aminolevulinate from L-glutamyl-tRNA(Glu): step 1/2.</text>
</comment>
<comment type="subunit">
    <text evidence="1">Homodimer.</text>
</comment>
<comment type="domain">
    <text evidence="1">Possesses an unusual extended V-shaped dimeric structure with each monomer consisting of three distinct domains arranged along a curved 'spinal' alpha-helix. The N-terminal catalytic domain specifically recognizes the glutamate moiety of the substrate. The second domain is the NADPH-binding domain, and the third C-terminal domain is responsible for dimerization.</text>
</comment>
<comment type="miscellaneous">
    <text evidence="1">During catalysis, the active site Cys acts as a nucleophile attacking the alpha-carbonyl group of tRNA-bound glutamate with the formation of a thioester intermediate between enzyme and glutamate, and the concomitant release of tRNA(Glu). The thioester intermediate is finally reduced by direct hydride transfer from NADPH, to form the product GSA.</text>
</comment>
<comment type="similarity">
    <text evidence="1">Belongs to the glutamyl-tRNA reductase family.</text>
</comment>
<gene>
    <name evidence="1" type="primary">hemA</name>
    <name type="ordered locus">STK_02120</name>
</gene>
<feature type="chain" id="PRO_0000114111" description="Glutamyl-tRNA reductase">
    <location>
        <begin position="1"/>
        <end position="412"/>
    </location>
</feature>
<feature type="active site" description="Nucleophile" evidence="1">
    <location>
        <position position="53"/>
    </location>
</feature>
<feature type="binding site" evidence="1">
    <location>
        <begin position="52"/>
        <end position="55"/>
    </location>
    <ligand>
        <name>substrate</name>
    </ligand>
</feature>
<feature type="binding site" evidence="1">
    <location>
        <position position="108"/>
    </location>
    <ligand>
        <name>substrate</name>
    </ligand>
</feature>
<feature type="binding site" evidence="1">
    <location>
        <begin position="113"/>
        <end position="115"/>
    </location>
    <ligand>
        <name>substrate</name>
    </ligand>
</feature>
<feature type="binding site" evidence="1">
    <location>
        <position position="119"/>
    </location>
    <ligand>
        <name>substrate</name>
    </ligand>
</feature>
<feature type="binding site" evidence="1">
    <location>
        <begin position="189"/>
        <end position="194"/>
    </location>
    <ligand>
        <name>NADP(+)</name>
        <dbReference type="ChEBI" id="CHEBI:58349"/>
    </ligand>
</feature>
<feature type="site" description="Important for activity" evidence="1">
    <location>
        <position position="98"/>
    </location>
</feature>
<dbReference type="EC" id="1.2.1.70" evidence="1"/>
<dbReference type="EMBL" id="BA000023">
    <property type="protein sequence ID" value="BAB65173.1"/>
    <property type="molecule type" value="Genomic_DNA"/>
</dbReference>
<dbReference type="RefSeq" id="WP_010978155.1">
    <property type="nucleotide sequence ID" value="NC_003106.2"/>
</dbReference>
<dbReference type="SMR" id="Q976H4"/>
<dbReference type="STRING" id="273063.STK_02120"/>
<dbReference type="GeneID" id="1458103"/>
<dbReference type="KEGG" id="sto:STK_02120"/>
<dbReference type="PATRIC" id="fig|273063.9.peg.261"/>
<dbReference type="eggNOG" id="arCOG01036">
    <property type="taxonomic scope" value="Archaea"/>
</dbReference>
<dbReference type="OrthoDB" id="4562at2157"/>
<dbReference type="UniPathway" id="UPA00251">
    <property type="reaction ID" value="UER00316"/>
</dbReference>
<dbReference type="Proteomes" id="UP000001015">
    <property type="component" value="Chromosome"/>
</dbReference>
<dbReference type="GO" id="GO:0008883">
    <property type="term" value="F:glutamyl-tRNA reductase activity"/>
    <property type="evidence" value="ECO:0007669"/>
    <property type="project" value="UniProtKB-UniRule"/>
</dbReference>
<dbReference type="GO" id="GO:0050661">
    <property type="term" value="F:NADP binding"/>
    <property type="evidence" value="ECO:0007669"/>
    <property type="project" value="InterPro"/>
</dbReference>
<dbReference type="GO" id="GO:0019353">
    <property type="term" value="P:protoporphyrinogen IX biosynthetic process from glutamate"/>
    <property type="evidence" value="ECO:0007669"/>
    <property type="project" value="TreeGrafter"/>
</dbReference>
<dbReference type="CDD" id="cd05213">
    <property type="entry name" value="NAD_bind_Glutamyl_tRNA_reduct"/>
    <property type="match status" value="1"/>
</dbReference>
<dbReference type="Gene3D" id="3.30.460.30">
    <property type="entry name" value="Glutamyl-tRNA reductase, N-terminal domain"/>
    <property type="match status" value="1"/>
</dbReference>
<dbReference type="Gene3D" id="3.40.50.720">
    <property type="entry name" value="NAD(P)-binding Rossmann-like Domain"/>
    <property type="match status" value="1"/>
</dbReference>
<dbReference type="HAMAP" id="MF_00087">
    <property type="entry name" value="Glu_tRNA_reductase"/>
    <property type="match status" value="1"/>
</dbReference>
<dbReference type="InterPro" id="IPR000343">
    <property type="entry name" value="4pyrrol_synth_GluRdtase"/>
</dbReference>
<dbReference type="InterPro" id="IPR015896">
    <property type="entry name" value="4pyrrol_synth_GluRdtase_dimer"/>
</dbReference>
<dbReference type="InterPro" id="IPR015895">
    <property type="entry name" value="4pyrrol_synth_GluRdtase_N"/>
</dbReference>
<dbReference type="InterPro" id="IPR018214">
    <property type="entry name" value="GluRdtase_CS"/>
</dbReference>
<dbReference type="InterPro" id="IPR036453">
    <property type="entry name" value="GluRdtase_dimer_dom_sf"/>
</dbReference>
<dbReference type="InterPro" id="IPR036343">
    <property type="entry name" value="GluRdtase_N_sf"/>
</dbReference>
<dbReference type="InterPro" id="IPR036291">
    <property type="entry name" value="NAD(P)-bd_dom_sf"/>
</dbReference>
<dbReference type="InterPro" id="IPR006151">
    <property type="entry name" value="Shikm_DH/Glu-tRNA_Rdtase"/>
</dbReference>
<dbReference type="NCBIfam" id="NF000752">
    <property type="entry name" value="PRK00045.4-2"/>
    <property type="match status" value="1"/>
</dbReference>
<dbReference type="PANTHER" id="PTHR43013">
    <property type="entry name" value="GLUTAMYL-TRNA REDUCTASE"/>
    <property type="match status" value="1"/>
</dbReference>
<dbReference type="PANTHER" id="PTHR43013:SF1">
    <property type="entry name" value="GLUTAMYL-TRNA REDUCTASE"/>
    <property type="match status" value="1"/>
</dbReference>
<dbReference type="Pfam" id="PF00745">
    <property type="entry name" value="GlutR_dimer"/>
    <property type="match status" value="1"/>
</dbReference>
<dbReference type="Pfam" id="PF05201">
    <property type="entry name" value="GlutR_N"/>
    <property type="match status" value="1"/>
</dbReference>
<dbReference type="Pfam" id="PF01488">
    <property type="entry name" value="Shikimate_DH"/>
    <property type="match status" value="1"/>
</dbReference>
<dbReference type="PIRSF" id="PIRSF000445">
    <property type="entry name" value="4pyrrol_synth_GluRdtase"/>
    <property type="match status" value="1"/>
</dbReference>
<dbReference type="SUPFAM" id="SSF69742">
    <property type="entry name" value="Glutamyl tRNA-reductase catalytic, N-terminal domain"/>
    <property type="match status" value="1"/>
</dbReference>
<dbReference type="SUPFAM" id="SSF69075">
    <property type="entry name" value="Glutamyl tRNA-reductase dimerization domain"/>
    <property type="match status" value="1"/>
</dbReference>
<dbReference type="SUPFAM" id="SSF51735">
    <property type="entry name" value="NAD(P)-binding Rossmann-fold domains"/>
    <property type="match status" value="1"/>
</dbReference>
<dbReference type="PROSITE" id="PS00747">
    <property type="entry name" value="GLUTR"/>
    <property type="match status" value="1"/>
</dbReference>
<accession>Q976H4</accession>
<protein>
    <recommendedName>
        <fullName evidence="1">Glutamyl-tRNA reductase</fullName>
        <shortName evidence="1">GluTR</shortName>
        <ecNumber evidence="1">1.2.1.70</ecNumber>
    </recommendedName>
</protein>
<keyword id="KW-0521">NADP</keyword>
<keyword id="KW-0560">Oxidoreductase</keyword>
<keyword id="KW-0627">Porphyrin biosynthesis</keyword>
<keyword id="KW-1185">Reference proteome</keyword>
<evidence type="ECO:0000255" key="1">
    <source>
        <dbReference type="HAMAP-Rule" id="MF_00087"/>
    </source>
</evidence>